<sequence>MIELIGHETPVPSQQQHTGGVRGTSACTPPGVGERTTVLYCPPPPPERPEVAAEINRRVVVWMQGLGLGGEDNVAGVYKHDPGRGITLCHPGSQDVERMTAAGKMIVAETAVDDYFCETNSRRDANDQTIGPNLSLAQSAIDAPRLTPDLQALWNKCRDDHPVLRAQHEAFGDLERISSPAQAQRVRHDIAQLYLGYNAENGWRLLNRLPPVWQYLANRQMNSFRPCLNLTDALDGYELAPQLYAHPLVQDCTARATLIATLYNDLASCEREIREHGLPFNLPAVIAAEERIALDEAFVRACEIHNELIQALEEATGHAASALADPALSRYLTGLWSWLAGSRHWHFTTARHRA</sequence>
<dbReference type="EC" id="4.2.3.118"/>
<dbReference type="EMBL" id="AM420293">
    <property type="protein sequence ID" value="CAM02994.1"/>
    <property type="molecule type" value="Genomic_DNA"/>
</dbReference>
<dbReference type="RefSeq" id="WP_011874125.1">
    <property type="nucleotide sequence ID" value="NC_009142.1"/>
</dbReference>
<dbReference type="SMR" id="A4FG19"/>
<dbReference type="STRING" id="405948.SACE_3722"/>
<dbReference type="KEGG" id="sen:SACE_3722"/>
<dbReference type="eggNOG" id="COG3170">
    <property type="taxonomic scope" value="Bacteria"/>
</dbReference>
<dbReference type="HOGENOM" id="CLU_047127_0_0_11"/>
<dbReference type="Proteomes" id="UP000006728">
    <property type="component" value="Chromosome"/>
</dbReference>
<dbReference type="GO" id="GO:0046872">
    <property type="term" value="F:metal ion binding"/>
    <property type="evidence" value="ECO:0007669"/>
    <property type="project" value="UniProtKB-KW"/>
</dbReference>
<dbReference type="GO" id="GO:0010333">
    <property type="term" value="F:terpene synthase activity"/>
    <property type="evidence" value="ECO:0000250"/>
    <property type="project" value="UniProtKB"/>
</dbReference>
<dbReference type="GO" id="GO:0042214">
    <property type="term" value="P:terpene metabolic process"/>
    <property type="evidence" value="ECO:0000314"/>
    <property type="project" value="UniProtKB"/>
</dbReference>
<dbReference type="Gene3D" id="1.10.600.10">
    <property type="entry name" value="Farnesyl Diphosphate Synthase"/>
    <property type="match status" value="1"/>
</dbReference>
<dbReference type="InterPro" id="IPR008949">
    <property type="entry name" value="Isoprenoid_synthase_dom_sf"/>
</dbReference>
<dbReference type="InterPro" id="IPR047945">
    <property type="entry name" value="MIB_synthase"/>
</dbReference>
<dbReference type="InterPro" id="IPR034686">
    <property type="entry name" value="Terpene_cyclase-like_2"/>
</dbReference>
<dbReference type="NCBIfam" id="NF041167">
    <property type="entry name" value="f2_encap_cargo2"/>
    <property type="match status" value="1"/>
</dbReference>
<dbReference type="PANTHER" id="PTHR35201:SF4">
    <property type="entry name" value="BETA-PINACENE SYNTHASE-RELATED"/>
    <property type="match status" value="1"/>
</dbReference>
<dbReference type="PANTHER" id="PTHR35201">
    <property type="entry name" value="TERPENE SYNTHASE"/>
    <property type="match status" value="1"/>
</dbReference>
<dbReference type="Pfam" id="PF19086">
    <property type="entry name" value="Terpene_syn_C_2"/>
    <property type="match status" value="1"/>
</dbReference>
<dbReference type="SFLD" id="SFLDS00005">
    <property type="entry name" value="Isoprenoid_Synthase_Type_I"/>
    <property type="match status" value="1"/>
</dbReference>
<dbReference type="SFLD" id="SFLDG01020">
    <property type="entry name" value="Terpene_Cyclase_Like_2"/>
    <property type="match status" value="1"/>
</dbReference>
<dbReference type="SUPFAM" id="SSF48576">
    <property type="entry name" value="Terpenoid synthases"/>
    <property type="match status" value="1"/>
</dbReference>
<organism>
    <name type="scientific">Saccharopolyspora erythraea (strain ATCC 11635 / DSM 40517 / JCM 4748 / NBRC 13426 / NCIMB 8594 / NRRL 2338)</name>
    <dbReference type="NCBI Taxonomy" id="405948"/>
    <lineage>
        <taxon>Bacteria</taxon>
        <taxon>Bacillati</taxon>
        <taxon>Actinomycetota</taxon>
        <taxon>Actinomycetes</taxon>
        <taxon>Pseudonocardiales</taxon>
        <taxon>Pseudonocardiaceae</taxon>
        <taxon>Saccharopolyspora</taxon>
    </lineage>
</organism>
<comment type="function">
    <text evidence="4">Catalyzes the cyclization of 2-methylgeranyl diphosphate (2-MeGPP) to 2-methylisoborneol (2-MIB), which likely involves the intermediacy of 2-methyllinalyl diphosphate.</text>
</comment>
<comment type="catalytic activity">
    <reaction>
        <text>(E)-2-methylgeranyl diphosphate + H2O = 2-methylisoborneol + diphosphate</text>
        <dbReference type="Rhea" id="RHEA:32571"/>
        <dbReference type="ChEBI" id="CHEBI:15377"/>
        <dbReference type="ChEBI" id="CHEBI:33019"/>
        <dbReference type="ChEBI" id="CHEBI:61984"/>
        <dbReference type="ChEBI" id="CHEBI:61987"/>
        <dbReference type="EC" id="4.2.3.118"/>
    </reaction>
</comment>
<comment type="cofactor">
    <cofactor evidence="1">
        <name>Mg(2+)</name>
        <dbReference type="ChEBI" id="CHEBI:18420"/>
    </cofactor>
</comment>
<comment type="miscellaneous">
    <text>2-MIB is a volatile organic compound that has an unusually low odor threshold. Together with geosmin, methylisoborneol is responsible for the characteristic smell of moist soil as well as unpleasant taste and odor episodes associated with public water supplies and contamination of various foodstuffs, including fish, wine, and beer.</text>
</comment>
<comment type="similarity">
    <text evidence="3">Belongs to the terpene synthase family. 2-methylisoborneol synthase subfamily.</text>
</comment>
<evidence type="ECO:0000250" key="1"/>
<evidence type="ECO:0000256" key="2">
    <source>
        <dbReference type="SAM" id="MobiDB-lite"/>
    </source>
</evidence>
<evidence type="ECO:0000305" key="3"/>
<evidence type="ECO:0000305" key="4">
    <source>
    </source>
</evidence>
<reference key="1">
    <citation type="journal article" date="2007" name="Nat. Biotechnol.">
        <title>Complete genome sequence of the erythromycin-producing bacterium Saccharopolyspora erythraea NRRL23338.</title>
        <authorList>
            <person name="Oliynyk M."/>
            <person name="Samborskyy M."/>
            <person name="Lester J.B."/>
            <person name="Mironenko T."/>
            <person name="Scott N."/>
            <person name="Dickens S."/>
            <person name="Haydock S.F."/>
            <person name="Leadlay P.F."/>
        </authorList>
    </citation>
    <scope>NUCLEOTIDE SEQUENCE [LARGE SCALE GENOMIC DNA]</scope>
    <source>
        <strain>ATCC 11635 / DSM 40517 / JCM 4748 / NBRC 13426 / NCIMB 8594 / NRRL 2338</strain>
    </source>
</reference>
<reference key="2">
    <citation type="journal article" date="2008" name="Proc. Natl. Acad. Sci. U.S.A.">
        <title>Identification and functional analysis of genes controlling biosynthesis of 2-methylisoborneol.</title>
        <authorList>
            <person name="Komatsu M."/>
            <person name="Tsuda M."/>
            <person name="Omura S."/>
            <person name="Oikawa H."/>
            <person name="Ikeda H."/>
        </authorList>
    </citation>
    <scope>FUNCTION IN 2-METHYLISOBORNEOL BIOSYNTHESIS</scope>
    <scope>PATHWAY</scope>
</reference>
<feature type="chain" id="PRO_0000403383" description="2-methylisoborneol synthase">
    <location>
        <begin position="1"/>
        <end position="354"/>
    </location>
</feature>
<feature type="region of interest" description="Disordered" evidence="2">
    <location>
        <begin position="1"/>
        <end position="29"/>
    </location>
</feature>
<feature type="binding site" evidence="1">
    <location>
        <position position="113"/>
    </location>
    <ligand>
        <name>Mg(2+)</name>
        <dbReference type="ChEBI" id="CHEBI:18420"/>
    </ligand>
</feature>
<feature type="binding site" evidence="1">
    <location>
        <position position="114"/>
    </location>
    <ligand>
        <name>Mg(2+)</name>
        <dbReference type="ChEBI" id="CHEBI:18420"/>
    </ligand>
</feature>
<feature type="binding site" evidence="1">
    <location>
        <position position="118"/>
    </location>
    <ligand>
        <name>Mg(2+)</name>
        <dbReference type="ChEBI" id="CHEBI:18420"/>
    </ligand>
</feature>
<feature type="binding site" evidence="1">
    <location>
        <position position="264"/>
    </location>
    <ligand>
        <name>Mg(2+)</name>
        <dbReference type="ChEBI" id="CHEBI:18420"/>
    </ligand>
</feature>
<feature type="binding site" evidence="1">
    <location>
        <position position="268"/>
    </location>
    <ligand>
        <name>Mg(2+)</name>
        <dbReference type="ChEBI" id="CHEBI:18420"/>
    </ligand>
</feature>
<feature type="binding site" evidence="1">
    <location>
        <position position="272"/>
    </location>
    <ligand>
        <name>Mg(2+)</name>
        <dbReference type="ChEBI" id="CHEBI:18420"/>
    </ligand>
</feature>
<name>MIBS_SACEN</name>
<gene>
    <name type="ordered locus">SACE_3722</name>
</gene>
<keyword id="KW-0456">Lyase</keyword>
<keyword id="KW-0460">Magnesium</keyword>
<keyword id="KW-0479">Metal-binding</keyword>
<keyword id="KW-1185">Reference proteome</keyword>
<accession>A4FG19</accession>
<protein>
    <recommendedName>
        <fullName>2-methylisoborneol synthase</fullName>
        <shortName>2-MIB synthase</shortName>
        <ecNumber>4.2.3.118</ecNumber>
    </recommendedName>
</protein>
<proteinExistence type="evidence at protein level"/>